<proteinExistence type="evidence at transcript level"/>
<reference key="1">
    <citation type="patent" date="1994-02-15" number="US5286486">
        <title>Coleopteran-active Bacillus thuringiensis isolates and genes encoding coleopteran-active toxins.</title>
        <authorList>
            <person name="Payne J.M."/>
            <person name="Fu J.M."/>
        </authorList>
    </citation>
    <scope>NUCLEOTIDE SEQUENCE [GENOMIC DNA]</scope>
    <source>
        <strain>HD867</strain>
    </source>
</reference>
<organism>
    <name type="scientific">Bacillus thuringiensis serovar kumamotoensis</name>
    <dbReference type="NCBI Taxonomy" id="132267"/>
    <lineage>
        <taxon>Bacteria</taxon>
        <taxon>Bacillati</taxon>
        <taxon>Bacillota</taxon>
        <taxon>Bacilli</taxon>
        <taxon>Bacillales</taxon>
        <taxon>Bacillaceae</taxon>
        <taxon>Bacillus</taxon>
        <taxon>Bacillus cereus group</taxon>
    </lineage>
</organism>
<evidence type="ECO:0000305" key="1"/>
<protein>
    <recommendedName>
        <fullName>Pesticidal crystal protein Cry7Ab</fullName>
    </recommendedName>
    <alternativeName>
        <fullName>130 kDa crystal protein</fullName>
    </alternativeName>
    <alternativeName>
        <fullName>Crystaline entomocidal protoxin</fullName>
    </alternativeName>
    <alternativeName>
        <fullName>Insecticidal delta-endotoxin CryVIIA(b)</fullName>
    </alternativeName>
</protein>
<feature type="chain" id="PRO_0000174074" description="Pesticidal crystal protein Cry7Ab">
    <location>
        <begin position="1"/>
        <end position="1138"/>
    </location>
</feature>
<keyword id="KW-0749">Sporulation</keyword>
<keyword id="KW-0800">Toxin</keyword>
<keyword id="KW-0843">Virulence</keyword>
<name>CR7AB_BACUK</name>
<accession>Q45708</accession>
<sequence>MNLNNLGGYEDSNRTLNNSLNYPTQKALSPSLKNMNYQDFLSITEREQPEALASGNTAINTVVSVTGATLSALGVPGASFITNFYLKITGLLWPHDKNIWDEFMTEVETLIEQKIEQYARNKALAELEGLGNNLTIYQQALEDWLNNPDDPATITRVIDRFRILDALFESYMPSFRVAGYEIPLLTVYAQAANLHLALLRDSTLYGDKWEFTQNNIEENYNRQKKHISEYSNHCVKWYNSGLSRLNGSTYEQWINYNRFRREMILMVLDIAAVFPIYDPRMYSMETSTQLTREVYTDPISLSISNPGIGPSFSQMENTAIRTPHLVDYLDELYIYTSKYKAFSHEIQPDLFYWSAHKVSFKQSEQSNLYTTGIYGKTSGYISSGAYSFRGNDIYRTLAAPSVVVYPYTQNYGVEQVEFYGVKGHVHYRGDNKYDLTYDSIDQLPPDGEPIHEKYTHRLCHATAISKSTPDYDNATIPIFSWTHRSAEYYNRIYPNKITKIPAVKMYKLGDTSTVVKGPGFTGGDLVKRGSNGYIGDIKATVNSPLSQNYRVRVRYATNVSGQFNVYINDKITLQRKFQNTVETIGEGKDLTYGSFGYIEYSTTIQFPDKHPKITLHLSDLSNNSSFYVDSIEFIPVDVNYDEKEKLEKAQKAVNTLFTEGRNALQKDVTDYKVDQVSILVDCISGDLYPNEKRELQNLVKYAKRLSYSRNLLLDPTFDSINSSEENGWYGSNGIVIGNGDFVFKGNYLIFSGTNDTQYPTYLYQKIDESKLKEYTRYKLKGFIESSQDLEAYVIRYDAKHRTLDVSDNLLPDILPENTCGEPNRCAAQQYLDENPSSECSSMQDGILSDSHSFSLNIDIGSINHNENLGIWVLFKISTLEGYAKFGNLEVIEDGPVIGEALARVKRQETKWRNKLAQLTTETQAIYTRAKQALDNLFANAQDSHLKIDVTFAEIAAARKIVQSIREAYMSWLSVVPGVNHPIFTELSERVQRAFQLYDVRNVVRNGRFLNGLSDWIVTSDVKVQEENGNNVLVLNNWDAQVLQNVKLYQDRGYILRVTARKIGIGEGYITITDEEGHTVQLRFTACEVIDASNAFISGYITKELEFFPDTEKVHIEIGETEGIFLVESIELFLMEELC</sequence>
<gene>
    <name type="primary">cry7Ab</name>
    <name type="synonym">cryVIIA(b)</name>
</gene>
<comment type="function">
    <text>Promotes colloidosmotic lysis by binding to the midgut epithelial cells of Coleoptera.</text>
</comment>
<comment type="developmental stage">
    <text>The crystal protein is produced during sporulation and is accumulated both as an inclusion and as part of the spore coat.</text>
</comment>
<comment type="miscellaneous">
    <text>Toxic segment of the protein is located in the N-terminus.</text>
</comment>
<comment type="similarity">
    <text evidence="1">Belongs to the delta endotoxin family.</text>
</comment>
<dbReference type="EMBL" id="U04368">
    <property type="protein sequence ID" value="AAA21121.1"/>
    <property type="molecule type" value="Genomic_DNA"/>
</dbReference>
<dbReference type="SMR" id="Q45708"/>
<dbReference type="GO" id="GO:0005102">
    <property type="term" value="F:signaling receptor binding"/>
    <property type="evidence" value="ECO:0007669"/>
    <property type="project" value="InterPro"/>
</dbReference>
<dbReference type="GO" id="GO:0090729">
    <property type="term" value="F:toxin activity"/>
    <property type="evidence" value="ECO:0007669"/>
    <property type="project" value="UniProtKB-KW"/>
</dbReference>
<dbReference type="GO" id="GO:0030435">
    <property type="term" value="P:sporulation resulting in formation of a cellular spore"/>
    <property type="evidence" value="ECO:0007669"/>
    <property type="project" value="UniProtKB-KW"/>
</dbReference>
<dbReference type="GO" id="GO:0001907">
    <property type="term" value="P:symbiont-mediated killing of host cell"/>
    <property type="evidence" value="ECO:0007669"/>
    <property type="project" value="InterPro"/>
</dbReference>
<dbReference type="CDD" id="cd04085">
    <property type="entry name" value="delta_endotoxin_C"/>
    <property type="match status" value="1"/>
</dbReference>
<dbReference type="Gene3D" id="2.60.120.260">
    <property type="entry name" value="Galactose-binding domain-like"/>
    <property type="match status" value="1"/>
</dbReference>
<dbReference type="Gene3D" id="2.100.10.10">
    <property type="entry name" value="Pesticidal crystal protein, central domain"/>
    <property type="match status" value="1"/>
</dbReference>
<dbReference type="Gene3D" id="1.20.190.10">
    <property type="entry name" value="Pesticidal crystal protein, N-terminal domain"/>
    <property type="match status" value="1"/>
</dbReference>
<dbReference type="InterPro" id="IPR048645">
    <property type="entry name" value="Cry1Ac-like_dom-VII"/>
</dbReference>
<dbReference type="InterPro" id="IPR041587">
    <property type="entry name" value="Cry_V"/>
</dbReference>
<dbReference type="InterPro" id="IPR008979">
    <property type="entry name" value="Galactose-bd-like_sf"/>
</dbReference>
<dbReference type="InterPro" id="IPR038979">
    <property type="entry name" value="Pest_crys"/>
</dbReference>
<dbReference type="InterPro" id="IPR005638">
    <property type="entry name" value="Pest_crys_dom-III"/>
</dbReference>
<dbReference type="InterPro" id="IPR005639">
    <property type="entry name" value="Pest_crys_dom_I"/>
</dbReference>
<dbReference type="InterPro" id="IPR036716">
    <property type="entry name" value="Pest_crys_N_sf"/>
</dbReference>
<dbReference type="InterPro" id="IPR036399">
    <property type="entry name" value="Pest_cryst_cen_dom_sf"/>
</dbReference>
<dbReference type="InterPro" id="IPR001178">
    <property type="entry name" value="Pest_cryst_dom_II"/>
</dbReference>
<dbReference type="PANTHER" id="PTHR37003">
    <property type="entry name" value="ENDOTOXIN_N DOMAIN-CONTAINING PROTEIN-RELATED"/>
    <property type="match status" value="1"/>
</dbReference>
<dbReference type="PANTHER" id="PTHR37003:SF2">
    <property type="entry name" value="PESTICIDAL CRYSTAL PROTEIN N-TERMINAL DOMAIN-CONTAINING PROTEIN"/>
    <property type="match status" value="1"/>
</dbReference>
<dbReference type="Pfam" id="PF17997">
    <property type="entry name" value="Cry1Ac_D5"/>
    <property type="match status" value="1"/>
</dbReference>
<dbReference type="Pfam" id="PF21463">
    <property type="entry name" value="Cry1Ac_dom-VII"/>
    <property type="match status" value="1"/>
</dbReference>
<dbReference type="Pfam" id="PF03944">
    <property type="entry name" value="Endotoxin_C"/>
    <property type="match status" value="1"/>
</dbReference>
<dbReference type="Pfam" id="PF00555">
    <property type="entry name" value="Endotoxin_M"/>
    <property type="match status" value="1"/>
</dbReference>
<dbReference type="Pfam" id="PF03945">
    <property type="entry name" value="Endotoxin_N"/>
    <property type="match status" value="1"/>
</dbReference>
<dbReference type="SUPFAM" id="SSF51096">
    <property type="entry name" value="delta-Endotoxin (insectocide), middle domain"/>
    <property type="match status" value="1"/>
</dbReference>
<dbReference type="SUPFAM" id="SSF56849">
    <property type="entry name" value="delta-Endotoxin (insectocide), N-terminal domain"/>
    <property type="match status" value="1"/>
</dbReference>
<dbReference type="SUPFAM" id="SSF49785">
    <property type="entry name" value="Galactose-binding domain-like"/>
    <property type="match status" value="2"/>
</dbReference>